<organism>
    <name type="scientific">Parasynechococcus marenigrum (strain WH8102)</name>
    <dbReference type="NCBI Taxonomy" id="84588"/>
    <lineage>
        <taxon>Bacteria</taxon>
        <taxon>Bacillati</taxon>
        <taxon>Cyanobacteriota</taxon>
        <taxon>Cyanophyceae</taxon>
        <taxon>Synechococcales</taxon>
        <taxon>Prochlorococcaceae</taxon>
        <taxon>Parasynechococcus</taxon>
        <taxon>Parasynechococcus marenigrum</taxon>
    </lineage>
</organism>
<reference key="1">
    <citation type="journal article" date="2003" name="Nature">
        <title>The genome of a motile marine Synechococcus.</title>
        <authorList>
            <person name="Palenik B."/>
            <person name="Brahamsha B."/>
            <person name="Larimer F.W."/>
            <person name="Land M.L."/>
            <person name="Hauser L."/>
            <person name="Chain P."/>
            <person name="Lamerdin J.E."/>
            <person name="Regala W."/>
            <person name="Allen E.E."/>
            <person name="McCarren J."/>
            <person name="Paulsen I.T."/>
            <person name="Dufresne A."/>
            <person name="Partensky F."/>
            <person name="Webb E.A."/>
            <person name="Waterbury J."/>
        </authorList>
    </citation>
    <scope>NUCLEOTIDE SEQUENCE [LARGE SCALE GENOMIC DNA]</scope>
    <source>
        <strain>WH8102</strain>
    </source>
</reference>
<dbReference type="EC" id="2.5.1.55" evidence="1"/>
<dbReference type="EMBL" id="BX569689">
    <property type="protein sequence ID" value="CAE06695.1"/>
    <property type="molecule type" value="Genomic_DNA"/>
</dbReference>
<dbReference type="RefSeq" id="WP_011127056.1">
    <property type="nucleotide sequence ID" value="NC_005070.1"/>
</dbReference>
<dbReference type="SMR" id="Q7U9S3"/>
<dbReference type="STRING" id="84588.SYNW0180"/>
<dbReference type="KEGG" id="syw:SYNW0180"/>
<dbReference type="eggNOG" id="COG2877">
    <property type="taxonomic scope" value="Bacteria"/>
</dbReference>
<dbReference type="HOGENOM" id="CLU_036666_0_0_3"/>
<dbReference type="UniPathway" id="UPA00030"/>
<dbReference type="UniPathway" id="UPA00357">
    <property type="reaction ID" value="UER00474"/>
</dbReference>
<dbReference type="Proteomes" id="UP000001422">
    <property type="component" value="Chromosome"/>
</dbReference>
<dbReference type="GO" id="GO:0005737">
    <property type="term" value="C:cytoplasm"/>
    <property type="evidence" value="ECO:0007669"/>
    <property type="project" value="UniProtKB-SubCell"/>
</dbReference>
<dbReference type="GO" id="GO:0008676">
    <property type="term" value="F:3-deoxy-8-phosphooctulonate synthase activity"/>
    <property type="evidence" value="ECO:0007669"/>
    <property type="project" value="UniProtKB-UniRule"/>
</dbReference>
<dbReference type="GO" id="GO:0019294">
    <property type="term" value="P:keto-3-deoxy-D-manno-octulosonic acid biosynthetic process"/>
    <property type="evidence" value="ECO:0007669"/>
    <property type="project" value="UniProtKB-UniRule"/>
</dbReference>
<dbReference type="Gene3D" id="3.20.20.70">
    <property type="entry name" value="Aldolase class I"/>
    <property type="match status" value="1"/>
</dbReference>
<dbReference type="HAMAP" id="MF_00056">
    <property type="entry name" value="KDO8P_synth"/>
    <property type="match status" value="1"/>
</dbReference>
<dbReference type="InterPro" id="IPR013785">
    <property type="entry name" value="Aldolase_TIM"/>
</dbReference>
<dbReference type="InterPro" id="IPR006218">
    <property type="entry name" value="DAHP1/KDSA"/>
</dbReference>
<dbReference type="InterPro" id="IPR006269">
    <property type="entry name" value="KDO8P_synthase"/>
</dbReference>
<dbReference type="NCBIfam" id="TIGR01362">
    <property type="entry name" value="KDO8P_synth"/>
    <property type="match status" value="1"/>
</dbReference>
<dbReference type="NCBIfam" id="NF003543">
    <property type="entry name" value="PRK05198.1"/>
    <property type="match status" value="1"/>
</dbReference>
<dbReference type="NCBIfam" id="NF009109">
    <property type="entry name" value="PRK12457.1"/>
    <property type="match status" value="1"/>
</dbReference>
<dbReference type="PANTHER" id="PTHR21057">
    <property type="entry name" value="PHOSPHO-2-DEHYDRO-3-DEOXYHEPTONATE ALDOLASE"/>
    <property type="match status" value="1"/>
</dbReference>
<dbReference type="Pfam" id="PF00793">
    <property type="entry name" value="DAHP_synth_1"/>
    <property type="match status" value="1"/>
</dbReference>
<dbReference type="SUPFAM" id="SSF51569">
    <property type="entry name" value="Aldolase"/>
    <property type="match status" value="1"/>
</dbReference>
<name>KDSA_PARMW</name>
<feature type="chain" id="PRO_0000187167" description="2-dehydro-3-deoxyphosphooctonate aldolase">
    <location>
        <begin position="1"/>
        <end position="283"/>
    </location>
</feature>
<comment type="catalytic activity">
    <reaction evidence="1">
        <text>D-arabinose 5-phosphate + phosphoenolpyruvate + H2O = 3-deoxy-alpha-D-manno-2-octulosonate-8-phosphate + phosphate</text>
        <dbReference type="Rhea" id="RHEA:14053"/>
        <dbReference type="ChEBI" id="CHEBI:15377"/>
        <dbReference type="ChEBI" id="CHEBI:43474"/>
        <dbReference type="ChEBI" id="CHEBI:57693"/>
        <dbReference type="ChEBI" id="CHEBI:58702"/>
        <dbReference type="ChEBI" id="CHEBI:85985"/>
        <dbReference type="EC" id="2.5.1.55"/>
    </reaction>
</comment>
<comment type="pathway">
    <text evidence="1">Carbohydrate biosynthesis; 3-deoxy-D-manno-octulosonate biosynthesis; 3-deoxy-D-manno-octulosonate from D-ribulose 5-phosphate: step 2/3.</text>
</comment>
<comment type="pathway">
    <text evidence="1">Bacterial outer membrane biogenesis; lipopolysaccharide biosynthesis.</text>
</comment>
<comment type="subcellular location">
    <subcellularLocation>
        <location evidence="1">Cytoplasm</location>
    </subcellularLocation>
</comment>
<comment type="similarity">
    <text evidence="1">Belongs to the KdsA family.</text>
</comment>
<protein>
    <recommendedName>
        <fullName evidence="1">2-dehydro-3-deoxyphosphooctonate aldolase</fullName>
        <ecNumber evidence="1">2.5.1.55</ecNumber>
    </recommendedName>
    <alternativeName>
        <fullName evidence="1">3-deoxy-D-manno-octulosonic acid 8-phosphate synthase</fullName>
    </alternativeName>
    <alternativeName>
        <fullName evidence="1">KDO-8-phosphate synthase</fullName>
        <shortName evidence="1">KDO 8-P synthase</shortName>
        <shortName evidence="1">KDOPS</shortName>
    </alternativeName>
    <alternativeName>
        <fullName evidence="1">Phospho-2-dehydro-3-deoxyoctonate aldolase</fullName>
    </alternativeName>
</protein>
<gene>
    <name evidence="1" type="primary">kdsA</name>
    <name type="ordered locus">SYNW0180</name>
</gene>
<keyword id="KW-0963">Cytoplasm</keyword>
<keyword id="KW-0448">Lipopolysaccharide biosynthesis</keyword>
<keyword id="KW-0808">Transferase</keyword>
<accession>Q7U9S3</accession>
<evidence type="ECO:0000255" key="1">
    <source>
        <dbReference type="HAMAP-Rule" id="MF_00056"/>
    </source>
</evidence>
<proteinExistence type="inferred from homology"/>
<sequence length="283" mass="30688">MTARQIQLGDITFANDRPFALLGGVNVLEDLDFALRCAGHYKQVCERLGIPLVFKASYDKANRSSIHSFRGPGLEAGLQILQAVKDTLGIPVITDVHSPEEAKAAAKVADIIQLPAFLARQTDLVRAMAETGAVINIKKPQFLSPEQIRNIVDKFRECGNEQLLICERGTNFGYDNLVVDMLGFGVMKRTCDDLPLIFDVTHALQCRDPGGAASGGRRSQVVDLAKAGMAVGLAGLFLEAHPDPNQARCDGPSALPLDQLEPFLTQVKAIDDLVKSQPMININ</sequence>